<protein>
    <recommendedName>
        <fullName evidence="1">Large ribosomal subunit protein uL4</fullName>
    </recommendedName>
    <alternativeName>
        <fullName evidence="3">50S ribosomal protein L4</fullName>
    </alternativeName>
</protein>
<dbReference type="EMBL" id="BX571874">
    <property type="protein sequence ID" value="CAE17097.1"/>
    <property type="molecule type" value="Genomic_DNA"/>
</dbReference>
<dbReference type="RefSeq" id="WP_011148794.1">
    <property type="nucleotide sequence ID" value="NC_005126.1"/>
</dbReference>
<dbReference type="SMR" id="Q7MYF2"/>
<dbReference type="STRING" id="243265.plu4725"/>
<dbReference type="GeneID" id="88808157"/>
<dbReference type="KEGG" id="plu:plu4725"/>
<dbReference type="eggNOG" id="COG0088">
    <property type="taxonomic scope" value="Bacteria"/>
</dbReference>
<dbReference type="HOGENOM" id="CLU_041575_5_2_6"/>
<dbReference type="OrthoDB" id="9803201at2"/>
<dbReference type="Proteomes" id="UP000002514">
    <property type="component" value="Chromosome"/>
</dbReference>
<dbReference type="GO" id="GO:1990904">
    <property type="term" value="C:ribonucleoprotein complex"/>
    <property type="evidence" value="ECO:0007669"/>
    <property type="project" value="UniProtKB-KW"/>
</dbReference>
<dbReference type="GO" id="GO:0005840">
    <property type="term" value="C:ribosome"/>
    <property type="evidence" value="ECO:0007669"/>
    <property type="project" value="UniProtKB-KW"/>
</dbReference>
<dbReference type="GO" id="GO:0019843">
    <property type="term" value="F:rRNA binding"/>
    <property type="evidence" value="ECO:0007669"/>
    <property type="project" value="UniProtKB-UniRule"/>
</dbReference>
<dbReference type="GO" id="GO:0003735">
    <property type="term" value="F:structural constituent of ribosome"/>
    <property type="evidence" value="ECO:0007669"/>
    <property type="project" value="InterPro"/>
</dbReference>
<dbReference type="GO" id="GO:0006412">
    <property type="term" value="P:translation"/>
    <property type="evidence" value="ECO:0007669"/>
    <property type="project" value="UniProtKB-UniRule"/>
</dbReference>
<dbReference type="FunFam" id="3.40.1370.10:FF:000001">
    <property type="entry name" value="50S ribosomal protein L4"/>
    <property type="match status" value="1"/>
</dbReference>
<dbReference type="Gene3D" id="3.40.1370.10">
    <property type="match status" value="1"/>
</dbReference>
<dbReference type="HAMAP" id="MF_01328_B">
    <property type="entry name" value="Ribosomal_uL4_B"/>
    <property type="match status" value="1"/>
</dbReference>
<dbReference type="InterPro" id="IPR002136">
    <property type="entry name" value="Ribosomal_uL4"/>
</dbReference>
<dbReference type="InterPro" id="IPR013005">
    <property type="entry name" value="Ribosomal_uL4-like"/>
</dbReference>
<dbReference type="InterPro" id="IPR023574">
    <property type="entry name" value="Ribosomal_uL4_dom_sf"/>
</dbReference>
<dbReference type="NCBIfam" id="TIGR03953">
    <property type="entry name" value="rplD_bact"/>
    <property type="match status" value="1"/>
</dbReference>
<dbReference type="PANTHER" id="PTHR10746">
    <property type="entry name" value="50S RIBOSOMAL PROTEIN L4"/>
    <property type="match status" value="1"/>
</dbReference>
<dbReference type="PANTHER" id="PTHR10746:SF6">
    <property type="entry name" value="LARGE RIBOSOMAL SUBUNIT PROTEIN UL4M"/>
    <property type="match status" value="1"/>
</dbReference>
<dbReference type="Pfam" id="PF00573">
    <property type="entry name" value="Ribosomal_L4"/>
    <property type="match status" value="1"/>
</dbReference>
<dbReference type="SUPFAM" id="SSF52166">
    <property type="entry name" value="Ribosomal protein L4"/>
    <property type="match status" value="1"/>
</dbReference>
<accession>Q7MYF2</accession>
<evidence type="ECO:0000255" key="1">
    <source>
        <dbReference type="HAMAP-Rule" id="MF_01328"/>
    </source>
</evidence>
<evidence type="ECO:0000256" key="2">
    <source>
        <dbReference type="SAM" id="MobiDB-lite"/>
    </source>
</evidence>
<evidence type="ECO:0000305" key="3"/>
<comment type="function">
    <text evidence="1">One of the primary rRNA binding proteins, this protein initially binds near the 5'-end of the 23S rRNA. It is important during the early stages of 50S assembly. It makes multiple contacts with different domains of the 23S rRNA in the assembled 50S subunit and ribosome.</text>
</comment>
<comment type="function">
    <text evidence="1">Forms part of the polypeptide exit tunnel.</text>
</comment>
<comment type="subunit">
    <text evidence="1">Part of the 50S ribosomal subunit.</text>
</comment>
<comment type="similarity">
    <text evidence="1">Belongs to the universal ribosomal protein uL4 family.</text>
</comment>
<keyword id="KW-1185">Reference proteome</keyword>
<keyword id="KW-0687">Ribonucleoprotein</keyword>
<keyword id="KW-0689">Ribosomal protein</keyword>
<keyword id="KW-0694">RNA-binding</keyword>
<keyword id="KW-0699">rRNA-binding</keyword>
<name>RL4_PHOLL</name>
<feature type="chain" id="PRO_0000129254" description="Large ribosomal subunit protein uL4">
    <location>
        <begin position="1"/>
        <end position="201"/>
    </location>
</feature>
<feature type="region of interest" description="Disordered" evidence="2">
    <location>
        <begin position="44"/>
        <end position="71"/>
    </location>
</feature>
<reference key="1">
    <citation type="journal article" date="2003" name="Nat. Biotechnol.">
        <title>The genome sequence of the entomopathogenic bacterium Photorhabdus luminescens.</title>
        <authorList>
            <person name="Duchaud E."/>
            <person name="Rusniok C."/>
            <person name="Frangeul L."/>
            <person name="Buchrieser C."/>
            <person name="Givaudan A."/>
            <person name="Taourit S."/>
            <person name="Bocs S."/>
            <person name="Boursaux-Eude C."/>
            <person name="Chandler M."/>
            <person name="Charles J.-F."/>
            <person name="Dassa E."/>
            <person name="Derose R."/>
            <person name="Derzelle S."/>
            <person name="Freyssinet G."/>
            <person name="Gaudriault S."/>
            <person name="Medigue C."/>
            <person name="Lanois A."/>
            <person name="Powell K."/>
            <person name="Siguier P."/>
            <person name="Vincent R."/>
            <person name="Wingate V."/>
            <person name="Zouine M."/>
            <person name="Glaser P."/>
            <person name="Boemare N."/>
            <person name="Danchin A."/>
            <person name="Kunst F."/>
        </authorList>
    </citation>
    <scope>NUCLEOTIDE SEQUENCE [LARGE SCALE GENOMIC DNA]</scope>
    <source>
        <strain>DSM 15139 / CIP 105565 / TT01</strain>
    </source>
</reference>
<organism>
    <name type="scientific">Photorhabdus laumondii subsp. laumondii (strain DSM 15139 / CIP 105565 / TT01)</name>
    <name type="common">Photorhabdus luminescens subsp. laumondii</name>
    <dbReference type="NCBI Taxonomy" id="243265"/>
    <lineage>
        <taxon>Bacteria</taxon>
        <taxon>Pseudomonadati</taxon>
        <taxon>Pseudomonadota</taxon>
        <taxon>Gammaproteobacteria</taxon>
        <taxon>Enterobacterales</taxon>
        <taxon>Morganellaceae</taxon>
        <taxon>Photorhabdus</taxon>
    </lineage>
</organism>
<gene>
    <name evidence="1" type="primary">rplD</name>
    <name type="ordered locus">plu4725</name>
</gene>
<proteinExistence type="inferred from homology"/>
<sequence length="201" mass="22142">MELVMKDAQGALTVSETTFGRDFNEALVHQVVVAYAAGARQGTRAQKTRAEVSGSGKKPWRQKGTGRARSGSIKSPIWRSGGVTFAAKPQDHSQKVNKKMYRGALKSILSELVRQDRLIVVEKFSVEAPKTKLLVQKLKEMALEDVLIITNEVDENLFLAARNLYKVDVRDVAGIDPVSLIAFDKVVMTADAVKQVEEMLA</sequence>